<dbReference type="Proteomes" id="UP000515154">
    <property type="component" value="Unplaced"/>
</dbReference>
<dbReference type="GO" id="GO:0000786">
    <property type="term" value="C:nucleosome"/>
    <property type="evidence" value="ECO:0007669"/>
    <property type="project" value="UniProtKB-KW"/>
</dbReference>
<dbReference type="GO" id="GO:0005634">
    <property type="term" value="C:nucleus"/>
    <property type="evidence" value="ECO:0007669"/>
    <property type="project" value="UniProtKB-SubCell"/>
</dbReference>
<dbReference type="GO" id="GO:0003677">
    <property type="term" value="F:DNA binding"/>
    <property type="evidence" value="ECO:0007669"/>
    <property type="project" value="UniProtKB-KW"/>
</dbReference>
<dbReference type="GO" id="GO:0030154">
    <property type="term" value="P:cell differentiation"/>
    <property type="evidence" value="ECO:0007669"/>
    <property type="project" value="UniProtKB-KW"/>
</dbReference>
<dbReference type="GO" id="GO:0030261">
    <property type="term" value="P:chromosome condensation"/>
    <property type="evidence" value="ECO:0007669"/>
    <property type="project" value="UniProtKB-KW"/>
</dbReference>
<dbReference type="GO" id="GO:0007283">
    <property type="term" value="P:spermatogenesis"/>
    <property type="evidence" value="ECO:0007669"/>
    <property type="project" value="UniProtKB-KW"/>
</dbReference>
<protein>
    <recommendedName>
        <fullName>Sperm protamine P5</fullName>
        <shortName>Po5</shortName>
    </recommendedName>
</protein>
<feature type="peptide" id="PRO_0000044312" description="Sperm protamine P5">
    <location>
        <begin position="1"/>
        <end position="30"/>
    </location>
</feature>
<feature type="region of interest" description="Disordered" evidence="1">
    <location>
        <begin position="1"/>
        <end position="30"/>
    </location>
</feature>
<reference key="1">
    <citation type="journal article" date="2004" name="Mol. Reprod. Dev.">
        <title>Chromatin organization during spermiogenesis in Octopus vulgaris. II: DNA-interacting proteins.</title>
        <authorList>
            <person name="Gimenez-Bonafe P."/>
            <person name="Soler F.M."/>
            <person name="Buesa C."/>
            <person name="Sautiere P.-E."/>
            <person name="Ausio J."/>
            <person name="Kouach M."/>
            <person name="Kasinsky H.E."/>
            <person name="Chiva M."/>
        </authorList>
    </citation>
    <scope>PROTEIN SEQUENCE</scope>
    <scope>FUNCTION</scope>
    <scope>MASS SPECTROMETRY</scope>
    <source>
        <tissue>Sperm</tissue>
    </source>
</reference>
<comment type="function">
    <text evidence="2 3">Protamines substitute for histones in the chromatin of sperm during the haploid phase of spermatogenesis. They compact sperm DNA into a highly condensed, stable and inactive complex.</text>
</comment>
<comment type="subcellular location">
    <subcellularLocation>
        <location>Nucleus</location>
    </subcellularLocation>
    <subcellularLocation>
        <location>Chromosome</location>
    </subcellularLocation>
</comment>
<comment type="tissue specificity">
    <text evidence="3">Testis.</text>
</comment>
<comment type="mass spectrometry" mass="3941.0" method="Electrospray" evidence="2"/>
<name>HSP5_OCTVU</name>
<sequence length="30" mass="3943">YRRRRRRGRRGRRRRGRRRRSRGRRRAHGG</sequence>
<proteinExistence type="evidence at protein level"/>
<evidence type="ECO:0000256" key="1">
    <source>
        <dbReference type="SAM" id="MobiDB-lite"/>
    </source>
</evidence>
<evidence type="ECO:0000269" key="2">
    <source>
    </source>
</evidence>
<evidence type="ECO:0000305" key="3"/>
<accession>P83217</accession>
<keyword id="KW-0158">Chromosome</keyword>
<keyword id="KW-0217">Developmental protein</keyword>
<keyword id="KW-0221">Differentiation</keyword>
<keyword id="KW-0903">Direct protein sequencing</keyword>
<keyword id="KW-0226">DNA condensation</keyword>
<keyword id="KW-0238">DNA-binding</keyword>
<keyword id="KW-0544">Nucleosome core</keyword>
<keyword id="KW-0539">Nucleus</keyword>
<keyword id="KW-1185">Reference proteome</keyword>
<keyword id="KW-0744">Spermatogenesis</keyword>
<organism evidence="3">
    <name type="scientific">Octopus vulgaris</name>
    <name type="common">Common octopus</name>
    <dbReference type="NCBI Taxonomy" id="6645"/>
    <lineage>
        <taxon>Eukaryota</taxon>
        <taxon>Metazoa</taxon>
        <taxon>Spiralia</taxon>
        <taxon>Lophotrochozoa</taxon>
        <taxon>Mollusca</taxon>
        <taxon>Cephalopoda</taxon>
        <taxon>Coleoidea</taxon>
        <taxon>Octopodiformes</taxon>
        <taxon>Octopoda</taxon>
        <taxon>Incirrata</taxon>
        <taxon>Octopodidae</taxon>
        <taxon>Octopus</taxon>
    </lineage>
</organism>